<organism>
    <name type="scientific">Borrelia turicatae (strain 91E135)</name>
    <dbReference type="NCBI Taxonomy" id="314724"/>
    <lineage>
        <taxon>Bacteria</taxon>
        <taxon>Pseudomonadati</taxon>
        <taxon>Spirochaetota</taxon>
        <taxon>Spirochaetia</taxon>
        <taxon>Spirochaetales</taxon>
        <taxon>Borreliaceae</taxon>
        <taxon>Borrelia</taxon>
    </lineage>
</organism>
<accession>A1R0C7</accession>
<feature type="chain" id="PRO_1000123266" description="Phosphopantetheine adenylyltransferase">
    <location>
        <begin position="1"/>
        <end position="165"/>
    </location>
</feature>
<feature type="binding site" evidence="1">
    <location>
        <begin position="9"/>
        <end position="10"/>
    </location>
    <ligand>
        <name>ATP</name>
        <dbReference type="ChEBI" id="CHEBI:30616"/>
    </ligand>
</feature>
<feature type="binding site" evidence="1">
    <location>
        <position position="9"/>
    </location>
    <ligand>
        <name>substrate</name>
    </ligand>
</feature>
<feature type="binding site" evidence="1">
    <location>
        <position position="17"/>
    </location>
    <ligand>
        <name>ATP</name>
        <dbReference type="ChEBI" id="CHEBI:30616"/>
    </ligand>
</feature>
<feature type="binding site" evidence="1">
    <location>
        <position position="41"/>
    </location>
    <ligand>
        <name>substrate</name>
    </ligand>
</feature>
<feature type="binding site" evidence="1">
    <location>
        <position position="75"/>
    </location>
    <ligand>
        <name>substrate</name>
    </ligand>
</feature>
<feature type="binding site" evidence="1">
    <location>
        <position position="89"/>
    </location>
    <ligand>
        <name>substrate</name>
    </ligand>
</feature>
<feature type="binding site" evidence="1">
    <location>
        <begin position="90"/>
        <end position="92"/>
    </location>
    <ligand>
        <name>ATP</name>
        <dbReference type="ChEBI" id="CHEBI:30616"/>
    </ligand>
</feature>
<feature type="binding site" evidence="1">
    <location>
        <position position="100"/>
    </location>
    <ligand>
        <name>ATP</name>
        <dbReference type="ChEBI" id="CHEBI:30616"/>
    </ligand>
</feature>
<feature type="binding site" evidence="1">
    <location>
        <begin position="125"/>
        <end position="131"/>
    </location>
    <ligand>
        <name>ATP</name>
        <dbReference type="ChEBI" id="CHEBI:30616"/>
    </ligand>
</feature>
<feature type="site" description="Transition state stabilizer" evidence="1">
    <location>
        <position position="17"/>
    </location>
</feature>
<dbReference type="EC" id="2.7.7.3" evidence="1"/>
<dbReference type="EMBL" id="CP000049">
    <property type="protein sequence ID" value="AAX18019.1"/>
    <property type="molecule type" value="Genomic_DNA"/>
</dbReference>
<dbReference type="RefSeq" id="WP_011772637.1">
    <property type="nucleotide sequence ID" value="NZ_CP073176.1"/>
</dbReference>
<dbReference type="SMR" id="A1R0C7"/>
<dbReference type="KEGG" id="btu:BT0702"/>
<dbReference type="eggNOG" id="COG0669">
    <property type="taxonomic scope" value="Bacteria"/>
</dbReference>
<dbReference type="HOGENOM" id="CLU_100149_1_1_12"/>
<dbReference type="UniPathway" id="UPA00241">
    <property type="reaction ID" value="UER00355"/>
</dbReference>
<dbReference type="Proteomes" id="UP000001205">
    <property type="component" value="Chromosome"/>
</dbReference>
<dbReference type="GO" id="GO:0005737">
    <property type="term" value="C:cytoplasm"/>
    <property type="evidence" value="ECO:0007669"/>
    <property type="project" value="UniProtKB-SubCell"/>
</dbReference>
<dbReference type="GO" id="GO:0005524">
    <property type="term" value="F:ATP binding"/>
    <property type="evidence" value="ECO:0007669"/>
    <property type="project" value="UniProtKB-KW"/>
</dbReference>
<dbReference type="GO" id="GO:0004595">
    <property type="term" value="F:pantetheine-phosphate adenylyltransferase activity"/>
    <property type="evidence" value="ECO:0007669"/>
    <property type="project" value="UniProtKB-UniRule"/>
</dbReference>
<dbReference type="GO" id="GO:0015937">
    <property type="term" value="P:coenzyme A biosynthetic process"/>
    <property type="evidence" value="ECO:0007669"/>
    <property type="project" value="UniProtKB-UniRule"/>
</dbReference>
<dbReference type="Gene3D" id="3.40.50.620">
    <property type="entry name" value="HUPs"/>
    <property type="match status" value="1"/>
</dbReference>
<dbReference type="HAMAP" id="MF_00151">
    <property type="entry name" value="PPAT_bact"/>
    <property type="match status" value="1"/>
</dbReference>
<dbReference type="InterPro" id="IPR004821">
    <property type="entry name" value="Cyt_trans-like"/>
</dbReference>
<dbReference type="InterPro" id="IPR001980">
    <property type="entry name" value="PPAT"/>
</dbReference>
<dbReference type="InterPro" id="IPR014729">
    <property type="entry name" value="Rossmann-like_a/b/a_fold"/>
</dbReference>
<dbReference type="NCBIfam" id="TIGR01510">
    <property type="entry name" value="coaD_prev_kdtB"/>
    <property type="match status" value="1"/>
</dbReference>
<dbReference type="NCBIfam" id="TIGR00125">
    <property type="entry name" value="cyt_tran_rel"/>
    <property type="match status" value="1"/>
</dbReference>
<dbReference type="PANTHER" id="PTHR21342">
    <property type="entry name" value="PHOSPHOPANTETHEINE ADENYLYLTRANSFERASE"/>
    <property type="match status" value="1"/>
</dbReference>
<dbReference type="PANTHER" id="PTHR21342:SF1">
    <property type="entry name" value="PHOSPHOPANTETHEINE ADENYLYLTRANSFERASE"/>
    <property type="match status" value="1"/>
</dbReference>
<dbReference type="Pfam" id="PF01467">
    <property type="entry name" value="CTP_transf_like"/>
    <property type="match status" value="1"/>
</dbReference>
<dbReference type="PRINTS" id="PR01020">
    <property type="entry name" value="LPSBIOSNTHSS"/>
</dbReference>
<dbReference type="SUPFAM" id="SSF52374">
    <property type="entry name" value="Nucleotidylyl transferase"/>
    <property type="match status" value="1"/>
</dbReference>
<sequence>MRVALFPGSFDPITWGHIDLVKRASLIFDKVIVLVANNSAKSYLLSDIERYELTFEVIASLGWSRIFVDRYDGIILDYALKNNIGFIVRGVRAFHDFEFEFERYVVNNKLSPSIDIVFLPSSDKYLFVRSDLVKELIKNKNFDLSSFIPDLVQKKLKSKFIDKLS</sequence>
<keyword id="KW-0067">ATP-binding</keyword>
<keyword id="KW-0173">Coenzyme A biosynthesis</keyword>
<keyword id="KW-0963">Cytoplasm</keyword>
<keyword id="KW-0460">Magnesium</keyword>
<keyword id="KW-0547">Nucleotide-binding</keyword>
<keyword id="KW-0548">Nucleotidyltransferase</keyword>
<keyword id="KW-1185">Reference proteome</keyword>
<keyword id="KW-0808">Transferase</keyword>
<protein>
    <recommendedName>
        <fullName evidence="1">Phosphopantetheine adenylyltransferase</fullName>
        <ecNumber evidence="1">2.7.7.3</ecNumber>
    </recommendedName>
    <alternativeName>
        <fullName evidence="1">Dephospho-CoA pyrophosphorylase</fullName>
    </alternativeName>
    <alternativeName>
        <fullName evidence="1">Pantetheine-phosphate adenylyltransferase</fullName>
        <shortName evidence="1">PPAT</shortName>
    </alternativeName>
</protein>
<name>COAD_BORT9</name>
<proteinExistence type="inferred from homology"/>
<comment type="function">
    <text evidence="1">Reversibly transfers an adenylyl group from ATP to 4'-phosphopantetheine, yielding dephospho-CoA (dPCoA) and pyrophosphate.</text>
</comment>
<comment type="catalytic activity">
    <reaction evidence="1">
        <text>(R)-4'-phosphopantetheine + ATP + H(+) = 3'-dephospho-CoA + diphosphate</text>
        <dbReference type="Rhea" id="RHEA:19801"/>
        <dbReference type="ChEBI" id="CHEBI:15378"/>
        <dbReference type="ChEBI" id="CHEBI:30616"/>
        <dbReference type="ChEBI" id="CHEBI:33019"/>
        <dbReference type="ChEBI" id="CHEBI:57328"/>
        <dbReference type="ChEBI" id="CHEBI:61723"/>
        <dbReference type="EC" id="2.7.7.3"/>
    </reaction>
</comment>
<comment type="cofactor">
    <cofactor evidence="1">
        <name>Mg(2+)</name>
        <dbReference type="ChEBI" id="CHEBI:18420"/>
    </cofactor>
</comment>
<comment type="pathway">
    <text evidence="1">Cofactor biosynthesis; coenzyme A biosynthesis; CoA from (R)-pantothenate: step 4/5.</text>
</comment>
<comment type="subunit">
    <text evidence="1">Homohexamer.</text>
</comment>
<comment type="subcellular location">
    <subcellularLocation>
        <location evidence="1">Cytoplasm</location>
    </subcellularLocation>
</comment>
<comment type="similarity">
    <text evidence="1">Belongs to the bacterial CoaD family.</text>
</comment>
<evidence type="ECO:0000255" key="1">
    <source>
        <dbReference type="HAMAP-Rule" id="MF_00151"/>
    </source>
</evidence>
<reference key="1">
    <citation type="submission" date="2004-12" db="EMBL/GenBank/DDBJ databases">
        <title>The genome sequence of Borrelia hermsii and Borrelia turicatae: comparative analysis of two agents of endemic N. America relapsing fever.</title>
        <authorList>
            <person name="Porcella S.F."/>
            <person name="Raffel S.J."/>
            <person name="Schrumpf M.E."/>
            <person name="Montgomery B."/>
            <person name="Smith T."/>
            <person name="Schwan T.G."/>
        </authorList>
    </citation>
    <scope>NUCLEOTIDE SEQUENCE [LARGE SCALE GENOMIC DNA]</scope>
    <source>
        <strain>91E135</strain>
    </source>
</reference>
<gene>
    <name evidence="1" type="primary">coaD</name>
    <name type="ordered locus">BT0702</name>
</gene>